<protein>
    <recommendedName>
        <fullName evidence="1">Large ribosomal subunit protein bL28</fullName>
    </recommendedName>
    <alternativeName>
        <fullName evidence="2">50S ribosomal protein L28</fullName>
    </alternativeName>
</protein>
<gene>
    <name evidence="1" type="primary">rpmB</name>
    <name type="ordered locus">ABO_0215</name>
</gene>
<accession>Q0VT57</accession>
<name>RL28_ALCBS</name>
<comment type="similarity">
    <text evidence="1">Belongs to the bacterial ribosomal protein bL28 family.</text>
</comment>
<reference key="1">
    <citation type="journal article" date="2006" name="Nat. Biotechnol.">
        <title>Genome sequence of the ubiquitous hydrocarbon-degrading marine bacterium Alcanivorax borkumensis.</title>
        <authorList>
            <person name="Schneiker S."/>
            <person name="Martins dos Santos V.A.P."/>
            <person name="Bartels D."/>
            <person name="Bekel T."/>
            <person name="Brecht M."/>
            <person name="Buhrmester J."/>
            <person name="Chernikova T.N."/>
            <person name="Denaro R."/>
            <person name="Ferrer M."/>
            <person name="Gertler C."/>
            <person name="Goesmann A."/>
            <person name="Golyshina O.V."/>
            <person name="Kaminski F."/>
            <person name="Khachane A.N."/>
            <person name="Lang S."/>
            <person name="Linke B."/>
            <person name="McHardy A.C."/>
            <person name="Meyer F."/>
            <person name="Nechitaylo T."/>
            <person name="Puehler A."/>
            <person name="Regenhardt D."/>
            <person name="Rupp O."/>
            <person name="Sabirova J.S."/>
            <person name="Selbitschka W."/>
            <person name="Yakimov M.M."/>
            <person name="Timmis K.N."/>
            <person name="Vorhoelter F.-J."/>
            <person name="Weidner S."/>
            <person name="Kaiser O."/>
            <person name="Golyshin P.N."/>
        </authorList>
    </citation>
    <scope>NUCLEOTIDE SEQUENCE [LARGE SCALE GENOMIC DNA]</scope>
    <source>
        <strain>ATCC 700651 / DSM 11573 / NCIMB 13689 / SK2</strain>
    </source>
</reference>
<organism>
    <name type="scientific">Alcanivorax borkumensis (strain ATCC 700651 / DSM 11573 / NCIMB 13689 / SK2)</name>
    <dbReference type="NCBI Taxonomy" id="393595"/>
    <lineage>
        <taxon>Bacteria</taxon>
        <taxon>Pseudomonadati</taxon>
        <taxon>Pseudomonadota</taxon>
        <taxon>Gammaproteobacteria</taxon>
        <taxon>Oceanospirillales</taxon>
        <taxon>Alcanivoracaceae</taxon>
        <taxon>Alcanivorax</taxon>
    </lineage>
</organism>
<evidence type="ECO:0000255" key="1">
    <source>
        <dbReference type="HAMAP-Rule" id="MF_00373"/>
    </source>
</evidence>
<evidence type="ECO:0000305" key="2"/>
<proteinExistence type="inferred from homology"/>
<dbReference type="EMBL" id="AM286690">
    <property type="protein sequence ID" value="CAL15663.1"/>
    <property type="molecule type" value="Genomic_DNA"/>
</dbReference>
<dbReference type="RefSeq" id="WP_011587512.1">
    <property type="nucleotide sequence ID" value="NC_008260.1"/>
</dbReference>
<dbReference type="SMR" id="Q0VT57"/>
<dbReference type="STRING" id="393595.ABO_0215"/>
<dbReference type="KEGG" id="abo:ABO_0215"/>
<dbReference type="eggNOG" id="COG0227">
    <property type="taxonomic scope" value="Bacteria"/>
</dbReference>
<dbReference type="HOGENOM" id="CLU_064548_3_1_6"/>
<dbReference type="OrthoDB" id="9805609at2"/>
<dbReference type="Proteomes" id="UP000008871">
    <property type="component" value="Chromosome"/>
</dbReference>
<dbReference type="GO" id="GO:0022625">
    <property type="term" value="C:cytosolic large ribosomal subunit"/>
    <property type="evidence" value="ECO:0007669"/>
    <property type="project" value="TreeGrafter"/>
</dbReference>
<dbReference type="GO" id="GO:0003735">
    <property type="term" value="F:structural constituent of ribosome"/>
    <property type="evidence" value="ECO:0007669"/>
    <property type="project" value="InterPro"/>
</dbReference>
<dbReference type="GO" id="GO:0006412">
    <property type="term" value="P:translation"/>
    <property type="evidence" value="ECO:0007669"/>
    <property type="project" value="UniProtKB-UniRule"/>
</dbReference>
<dbReference type="FunFam" id="2.30.170.40:FF:000001">
    <property type="entry name" value="50S ribosomal protein L28"/>
    <property type="match status" value="1"/>
</dbReference>
<dbReference type="Gene3D" id="2.30.170.40">
    <property type="entry name" value="Ribosomal protein L28/L24"/>
    <property type="match status" value="1"/>
</dbReference>
<dbReference type="HAMAP" id="MF_00373">
    <property type="entry name" value="Ribosomal_bL28"/>
    <property type="match status" value="1"/>
</dbReference>
<dbReference type="InterPro" id="IPR026569">
    <property type="entry name" value="Ribosomal_bL28"/>
</dbReference>
<dbReference type="InterPro" id="IPR034704">
    <property type="entry name" value="Ribosomal_bL28/bL31-like_sf"/>
</dbReference>
<dbReference type="InterPro" id="IPR001383">
    <property type="entry name" value="Ribosomal_bL28_bact-type"/>
</dbReference>
<dbReference type="InterPro" id="IPR037147">
    <property type="entry name" value="Ribosomal_bL28_sf"/>
</dbReference>
<dbReference type="NCBIfam" id="TIGR00009">
    <property type="entry name" value="L28"/>
    <property type="match status" value="1"/>
</dbReference>
<dbReference type="PANTHER" id="PTHR13528">
    <property type="entry name" value="39S RIBOSOMAL PROTEIN L28, MITOCHONDRIAL"/>
    <property type="match status" value="1"/>
</dbReference>
<dbReference type="PANTHER" id="PTHR13528:SF2">
    <property type="entry name" value="LARGE RIBOSOMAL SUBUNIT PROTEIN BL28M"/>
    <property type="match status" value="1"/>
</dbReference>
<dbReference type="Pfam" id="PF00830">
    <property type="entry name" value="Ribosomal_L28"/>
    <property type="match status" value="1"/>
</dbReference>
<dbReference type="SUPFAM" id="SSF143800">
    <property type="entry name" value="L28p-like"/>
    <property type="match status" value="1"/>
</dbReference>
<feature type="chain" id="PRO_1000007161" description="Large ribosomal subunit protein bL28">
    <location>
        <begin position="1"/>
        <end position="78"/>
    </location>
</feature>
<keyword id="KW-1185">Reference proteome</keyword>
<keyword id="KW-0687">Ribonucleoprotein</keyword>
<keyword id="KW-0689">Ribosomal protein</keyword>
<sequence length="78" mass="9125">MSKVCQVTGKRPVTGNRVSHSNIKTKRRFEPNLHHHRFWVESEKRFVRLRVSSKGMRIIDKKGIDSVLADIRSRGNRV</sequence>